<keyword id="KW-0029">Amino-acid transport</keyword>
<keyword id="KW-0997">Cell inner membrane</keyword>
<keyword id="KW-1003">Cell membrane</keyword>
<keyword id="KW-0472">Membrane</keyword>
<keyword id="KW-0769">Symport</keyword>
<keyword id="KW-0812">Transmembrane</keyword>
<keyword id="KW-1133">Transmembrane helix</keyword>
<keyword id="KW-0813">Transport</keyword>
<sequence length="411" mass="42594">MQKLLQKITQGSLVKQIMVGLVAGIIVALVSPATASAVGLLGALFVGALKAVAPVLVLVLVMASIANHKHGQKTNIRPILFLYLLGTFAAALVAVVVSFMFPSNLALVAGNAEINPPGGIIEVLKGLLLSVVANPFQALISANYIGILAWAVGLGLALRHSSDTTKSLINDMSHAVTMVVRAVIRCAPLGIFGLVASTLAETGFGALWGYAQLLVVLIGCMLLVALVLNPLIVFWKIRRNPYPLVFACLRESGVTAFFTRSSAANIPVNMELCKKLNLNEDTYSVSIPLGATINMAGAAITITVLTLAAVHTLGIPVDVPTALLLSVVAAVCACGASGVAGGSLLLIPLACNMFGIPNDVAMQVVAVGFIIGVLQDSAETALNSSTDVLFTAAACQAEDQRLADEDPLKVR</sequence>
<reference key="1">
    <citation type="submission" date="2007-09" db="EMBL/GenBank/DDBJ databases">
        <title>Complete sequence of chromosome of Serratia proteamaculans 568.</title>
        <authorList>
            <consortium name="US DOE Joint Genome Institute"/>
            <person name="Copeland A."/>
            <person name="Lucas S."/>
            <person name="Lapidus A."/>
            <person name="Barry K."/>
            <person name="Glavina del Rio T."/>
            <person name="Dalin E."/>
            <person name="Tice H."/>
            <person name="Pitluck S."/>
            <person name="Chain P."/>
            <person name="Malfatti S."/>
            <person name="Shin M."/>
            <person name="Vergez L."/>
            <person name="Schmutz J."/>
            <person name="Larimer F."/>
            <person name="Land M."/>
            <person name="Hauser L."/>
            <person name="Kyrpides N."/>
            <person name="Kim E."/>
            <person name="Taghavi S."/>
            <person name="Newman L."/>
            <person name="Vangronsveld J."/>
            <person name="van der Lelie D."/>
            <person name="Richardson P."/>
        </authorList>
    </citation>
    <scope>NUCLEOTIDE SEQUENCE [LARGE SCALE GENOMIC DNA]</scope>
    <source>
        <strain>568</strain>
    </source>
</reference>
<comment type="function">
    <text evidence="1">Involved in the import of serine and threonine into the cell, with the concomitant import of sodium (symport system).</text>
</comment>
<comment type="catalytic activity">
    <reaction evidence="1">
        <text>L-serine(in) + Na(+)(in) = L-serine(out) + Na(+)(out)</text>
        <dbReference type="Rhea" id="RHEA:29575"/>
        <dbReference type="ChEBI" id="CHEBI:29101"/>
        <dbReference type="ChEBI" id="CHEBI:33384"/>
    </reaction>
    <physiologicalReaction direction="right-to-left" evidence="1">
        <dbReference type="Rhea" id="RHEA:29577"/>
    </physiologicalReaction>
</comment>
<comment type="catalytic activity">
    <reaction evidence="1">
        <text>L-threonine(in) + Na(+)(in) = L-threonine(out) + Na(+)(out)</text>
        <dbReference type="Rhea" id="RHEA:69999"/>
        <dbReference type="ChEBI" id="CHEBI:29101"/>
        <dbReference type="ChEBI" id="CHEBI:57926"/>
    </reaction>
    <physiologicalReaction direction="right-to-left" evidence="1">
        <dbReference type="Rhea" id="RHEA:70001"/>
    </physiologicalReaction>
</comment>
<comment type="subcellular location">
    <subcellularLocation>
        <location evidence="1">Cell inner membrane</location>
        <topology evidence="1">Multi-pass membrane protein</topology>
    </subcellularLocation>
</comment>
<comment type="similarity">
    <text evidence="1">Belongs to the dicarboxylate/amino acid:cation symporter (DAACS) (TC 2.A.23) family.</text>
</comment>
<feature type="chain" id="PRO_0000318796" description="Serine/threonine transporter SstT">
    <location>
        <begin position="1"/>
        <end position="411"/>
    </location>
</feature>
<feature type="transmembrane region" description="Helical" evidence="1">
    <location>
        <begin position="17"/>
        <end position="37"/>
    </location>
</feature>
<feature type="transmembrane region" description="Helical" evidence="1">
    <location>
        <begin position="41"/>
        <end position="61"/>
    </location>
</feature>
<feature type="transmembrane region" description="Helical" evidence="1">
    <location>
        <begin position="79"/>
        <end position="99"/>
    </location>
</feature>
<feature type="transmembrane region" description="Helical" evidence="1">
    <location>
        <begin position="138"/>
        <end position="158"/>
    </location>
</feature>
<feature type="transmembrane region" description="Helical" evidence="1">
    <location>
        <begin position="189"/>
        <end position="209"/>
    </location>
</feature>
<feature type="transmembrane region" description="Helical" evidence="1">
    <location>
        <begin position="214"/>
        <end position="234"/>
    </location>
</feature>
<feature type="transmembrane region" description="Helical" evidence="1">
    <location>
        <begin position="295"/>
        <end position="315"/>
    </location>
</feature>
<feature type="transmembrane region" description="Helical" evidence="1">
    <location>
        <begin position="327"/>
        <end position="347"/>
    </location>
</feature>
<gene>
    <name evidence="1" type="primary">sstT</name>
    <name type="ordered locus">Spro_4319</name>
</gene>
<protein>
    <recommendedName>
        <fullName evidence="1">Serine/threonine transporter SstT</fullName>
    </recommendedName>
    <alternativeName>
        <fullName evidence="1">Na(+)/serine-threonine symporter</fullName>
    </alternativeName>
</protein>
<organism>
    <name type="scientific">Serratia proteamaculans (strain 568)</name>
    <dbReference type="NCBI Taxonomy" id="399741"/>
    <lineage>
        <taxon>Bacteria</taxon>
        <taxon>Pseudomonadati</taxon>
        <taxon>Pseudomonadota</taxon>
        <taxon>Gammaproteobacteria</taxon>
        <taxon>Enterobacterales</taxon>
        <taxon>Yersiniaceae</taxon>
        <taxon>Serratia</taxon>
    </lineage>
</organism>
<evidence type="ECO:0000255" key="1">
    <source>
        <dbReference type="HAMAP-Rule" id="MF_01582"/>
    </source>
</evidence>
<proteinExistence type="inferred from homology"/>
<dbReference type="EMBL" id="CP000826">
    <property type="protein sequence ID" value="ABV43413.1"/>
    <property type="molecule type" value="Genomic_DNA"/>
</dbReference>
<dbReference type="SMR" id="A8GJX3"/>
<dbReference type="STRING" id="399741.Spro_4319"/>
<dbReference type="KEGG" id="spe:Spro_4319"/>
<dbReference type="eggNOG" id="COG3633">
    <property type="taxonomic scope" value="Bacteria"/>
</dbReference>
<dbReference type="HOGENOM" id="CLU_044581_0_0_6"/>
<dbReference type="OrthoDB" id="9768885at2"/>
<dbReference type="GO" id="GO:0005886">
    <property type="term" value="C:plasma membrane"/>
    <property type="evidence" value="ECO:0007669"/>
    <property type="project" value="UniProtKB-SubCell"/>
</dbReference>
<dbReference type="GO" id="GO:0005295">
    <property type="term" value="F:neutral L-amino acid:sodium symporter activity"/>
    <property type="evidence" value="ECO:0007669"/>
    <property type="project" value="TreeGrafter"/>
</dbReference>
<dbReference type="GO" id="GO:0032329">
    <property type="term" value="P:serine transport"/>
    <property type="evidence" value="ECO:0007669"/>
    <property type="project" value="InterPro"/>
</dbReference>
<dbReference type="GO" id="GO:0015826">
    <property type="term" value="P:threonine transport"/>
    <property type="evidence" value="ECO:0007669"/>
    <property type="project" value="InterPro"/>
</dbReference>
<dbReference type="FunFam" id="1.10.3860.10:FF:000003">
    <property type="entry name" value="Serine/threonine transporter sstT"/>
    <property type="match status" value="1"/>
</dbReference>
<dbReference type="Gene3D" id="1.10.3860.10">
    <property type="entry name" value="Sodium:dicarboxylate symporter"/>
    <property type="match status" value="1"/>
</dbReference>
<dbReference type="HAMAP" id="MF_01582">
    <property type="entry name" value="Ser_Thr_transp_SstT"/>
    <property type="match status" value="1"/>
</dbReference>
<dbReference type="InterPro" id="IPR001991">
    <property type="entry name" value="Na-dicarboxylate_symporter"/>
</dbReference>
<dbReference type="InterPro" id="IPR036458">
    <property type="entry name" value="Na:dicarbo_symporter_sf"/>
</dbReference>
<dbReference type="InterPro" id="IPR023025">
    <property type="entry name" value="Ser_Thr_transp_SstT"/>
</dbReference>
<dbReference type="NCBIfam" id="NF010151">
    <property type="entry name" value="PRK13628.1"/>
    <property type="match status" value="1"/>
</dbReference>
<dbReference type="PANTHER" id="PTHR42865">
    <property type="entry name" value="PROTON/GLUTAMATE-ASPARTATE SYMPORTER"/>
    <property type="match status" value="1"/>
</dbReference>
<dbReference type="PANTHER" id="PTHR42865:SF8">
    <property type="entry name" value="SERINE_THREONINE TRANSPORTER SSTT"/>
    <property type="match status" value="1"/>
</dbReference>
<dbReference type="Pfam" id="PF00375">
    <property type="entry name" value="SDF"/>
    <property type="match status" value="1"/>
</dbReference>
<dbReference type="PRINTS" id="PR00173">
    <property type="entry name" value="EDTRNSPORT"/>
</dbReference>
<dbReference type="SUPFAM" id="SSF118215">
    <property type="entry name" value="Proton glutamate symport protein"/>
    <property type="match status" value="1"/>
</dbReference>
<accession>A8GJX3</accession>
<name>SSTT_SERP5</name>